<dbReference type="EMBL" id="AE017308">
    <property type="protein sequence ID" value="AAT27731.1"/>
    <property type="molecule type" value="Genomic_DNA"/>
</dbReference>
<dbReference type="RefSeq" id="WP_011264765.1">
    <property type="nucleotide sequence ID" value="NC_006908.1"/>
</dbReference>
<dbReference type="SMR" id="Q6KI45"/>
<dbReference type="STRING" id="267748.MMOB2450"/>
<dbReference type="KEGG" id="mmo:MMOB2450"/>
<dbReference type="eggNOG" id="COG0093">
    <property type="taxonomic scope" value="Bacteria"/>
</dbReference>
<dbReference type="HOGENOM" id="CLU_095071_2_1_14"/>
<dbReference type="OrthoDB" id="9806379at2"/>
<dbReference type="Proteomes" id="UP000009072">
    <property type="component" value="Chromosome"/>
</dbReference>
<dbReference type="GO" id="GO:0022625">
    <property type="term" value="C:cytosolic large ribosomal subunit"/>
    <property type="evidence" value="ECO:0007669"/>
    <property type="project" value="TreeGrafter"/>
</dbReference>
<dbReference type="GO" id="GO:0070180">
    <property type="term" value="F:large ribosomal subunit rRNA binding"/>
    <property type="evidence" value="ECO:0007669"/>
    <property type="project" value="TreeGrafter"/>
</dbReference>
<dbReference type="GO" id="GO:0003735">
    <property type="term" value="F:structural constituent of ribosome"/>
    <property type="evidence" value="ECO:0007669"/>
    <property type="project" value="InterPro"/>
</dbReference>
<dbReference type="GO" id="GO:0006412">
    <property type="term" value="P:translation"/>
    <property type="evidence" value="ECO:0007669"/>
    <property type="project" value="UniProtKB-UniRule"/>
</dbReference>
<dbReference type="CDD" id="cd00337">
    <property type="entry name" value="Ribosomal_uL14"/>
    <property type="match status" value="1"/>
</dbReference>
<dbReference type="Gene3D" id="2.40.150.20">
    <property type="entry name" value="Ribosomal protein L14"/>
    <property type="match status" value="1"/>
</dbReference>
<dbReference type="HAMAP" id="MF_01367">
    <property type="entry name" value="Ribosomal_uL14"/>
    <property type="match status" value="1"/>
</dbReference>
<dbReference type="InterPro" id="IPR000218">
    <property type="entry name" value="Ribosomal_uL14"/>
</dbReference>
<dbReference type="InterPro" id="IPR005745">
    <property type="entry name" value="Ribosomal_uL14_bac-type"/>
</dbReference>
<dbReference type="InterPro" id="IPR019972">
    <property type="entry name" value="Ribosomal_uL14_CS"/>
</dbReference>
<dbReference type="InterPro" id="IPR036853">
    <property type="entry name" value="Ribosomal_uL14_sf"/>
</dbReference>
<dbReference type="NCBIfam" id="TIGR01067">
    <property type="entry name" value="rplN_bact"/>
    <property type="match status" value="1"/>
</dbReference>
<dbReference type="PANTHER" id="PTHR11761">
    <property type="entry name" value="50S/60S RIBOSOMAL PROTEIN L14/L23"/>
    <property type="match status" value="1"/>
</dbReference>
<dbReference type="PANTHER" id="PTHR11761:SF3">
    <property type="entry name" value="LARGE RIBOSOMAL SUBUNIT PROTEIN UL14M"/>
    <property type="match status" value="1"/>
</dbReference>
<dbReference type="Pfam" id="PF00238">
    <property type="entry name" value="Ribosomal_L14"/>
    <property type="match status" value="1"/>
</dbReference>
<dbReference type="SMART" id="SM01374">
    <property type="entry name" value="Ribosomal_L14"/>
    <property type="match status" value="1"/>
</dbReference>
<dbReference type="SUPFAM" id="SSF50193">
    <property type="entry name" value="Ribosomal protein L14"/>
    <property type="match status" value="1"/>
</dbReference>
<dbReference type="PROSITE" id="PS00049">
    <property type="entry name" value="RIBOSOMAL_L14"/>
    <property type="match status" value="1"/>
</dbReference>
<protein>
    <recommendedName>
        <fullName evidence="1">Large ribosomal subunit protein uL14</fullName>
    </recommendedName>
    <alternativeName>
        <fullName evidence="2">50S ribosomal protein L14</fullName>
    </alternativeName>
</protein>
<accession>Q6KI45</accession>
<evidence type="ECO:0000255" key="1">
    <source>
        <dbReference type="HAMAP-Rule" id="MF_01367"/>
    </source>
</evidence>
<evidence type="ECO:0000305" key="2"/>
<reference key="1">
    <citation type="journal article" date="2004" name="Genome Res.">
        <title>The complete genome and proteome of Mycoplasma mobile.</title>
        <authorList>
            <person name="Jaffe J.D."/>
            <person name="Stange-Thomann N."/>
            <person name="Smith C."/>
            <person name="DeCaprio D."/>
            <person name="Fisher S."/>
            <person name="Butler J."/>
            <person name="Calvo S."/>
            <person name="Elkins T."/>
            <person name="FitzGerald M.G."/>
            <person name="Hafez N."/>
            <person name="Kodira C.D."/>
            <person name="Major J."/>
            <person name="Wang S."/>
            <person name="Wilkinson J."/>
            <person name="Nicol R."/>
            <person name="Nusbaum C."/>
            <person name="Birren B."/>
            <person name="Berg H.C."/>
            <person name="Church G.M."/>
        </authorList>
    </citation>
    <scope>NUCLEOTIDE SEQUENCE [LARGE SCALE GENOMIC DNA]</scope>
    <source>
        <strain>ATCC 43663 / NCTC 11711 / 163 K</strain>
    </source>
</reference>
<keyword id="KW-1185">Reference proteome</keyword>
<keyword id="KW-0687">Ribonucleoprotein</keyword>
<keyword id="KW-0689">Ribosomal protein</keyword>
<keyword id="KW-0694">RNA-binding</keyword>
<keyword id="KW-0699">rRNA-binding</keyword>
<comment type="function">
    <text evidence="1">Binds to 23S rRNA. Forms part of two intersubunit bridges in the 70S ribosome.</text>
</comment>
<comment type="subunit">
    <text evidence="1">Part of the 50S ribosomal subunit. Forms a cluster with proteins L3 and L19. In the 70S ribosome, L14 and L19 interact and together make contacts with the 16S rRNA in bridges B5 and B8.</text>
</comment>
<comment type="similarity">
    <text evidence="1">Belongs to the universal ribosomal protein uL14 family.</text>
</comment>
<organism>
    <name type="scientific">Mycoplasma mobile (strain ATCC 43663 / 163K / NCTC 11711)</name>
    <name type="common">Mesomycoplasma mobile</name>
    <dbReference type="NCBI Taxonomy" id="267748"/>
    <lineage>
        <taxon>Bacteria</taxon>
        <taxon>Bacillati</taxon>
        <taxon>Mycoplasmatota</taxon>
        <taxon>Mycoplasmoidales</taxon>
        <taxon>Metamycoplasmataceae</taxon>
        <taxon>Mesomycoplasma</taxon>
    </lineage>
</organism>
<feature type="chain" id="PRO_1000055638" description="Large ribosomal subunit protein uL14">
    <location>
        <begin position="1"/>
        <end position="122"/>
    </location>
</feature>
<sequence length="122" mass="13224">MIQEESRVKVADNSGAKEVGIIRNLGGSVKKTSNIGDIVVCSIKKALPTGLVKEGQVVRAVVVRTKYGIKRKDGTHIKFDDNAVVILKEDGTPRATRVFGPVARELRDKGYLKIVSLAPEVL</sequence>
<gene>
    <name evidence="1" type="primary">rplN</name>
    <name type="ordered locus">MMOB2450</name>
</gene>
<proteinExistence type="inferred from homology"/>
<name>RL14_MYCM1</name>